<dbReference type="EC" id="2.7.1.36" evidence="1"/>
<dbReference type="EMBL" id="L77117">
    <property type="protein sequence ID" value="AAB99088.1"/>
    <property type="molecule type" value="Genomic_DNA"/>
</dbReference>
<dbReference type="PIR" id="F64435">
    <property type="entry name" value="F64435"/>
</dbReference>
<dbReference type="RefSeq" id="WP_010870599.1">
    <property type="nucleotide sequence ID" value="NC_000909.1"/>
</dbReference>
<dbReference type="PDB" id="1KKH">
    <property type="method" value="X-ray"/>
    <property type="resolution" value="2.40 A"/>
    <property type="chains" value="A=1-312"/>
</dbReference>
<dbReference type="PDB" id="1VIS">
    <property type="method" value="X-ray"/>
    <property type="resolution" value="2.69 A"/>
    <property type="chains" value="A=2-312"/>
</dbReference>
<dbReference type="PDBsum" id="1KKH"/>
<dbReference type="PDBsum" id="1VIS"/>
<dbReference type="SMR" id="Q58487"/>
<dbReference type="FunCoup" id="Q58487">
    <property type="interactions" value="165"/>
</dbReference>
<dbReference type="STRING" id="243232.MJ_1087"/>
<dbReference type="PaxDb" id="243232-MJ_1087"/>
<dbReference type="EnsemblBacteria" id="AAB99088">
    <property type="protein sequence ID" value="AAB99088"/>
    <property type="gene ID" value="MJ_1087"/>
</dbReference>
<dbReference type="GeneID" id="1451983"/>
<dbReference type="KEGG" id="mja:MJ_1087"/>
<dbReference type="eggNOG" id="arCOG01028">
    <property type="taxonomic scope" value="Archaea"/>
</dbReference>
<dbReference type="HOGENOM" id="CLU_017814_0_0_2"/>
<dbReference type="InParanoid" id="Q58487"/>
<dbReference type="OrthoDB" id="19001at2157"/>
<dbReference type="PhylomeDB" id="Q58487"/>
<dbReference type="BioCyc" id="MetaCyc:MONOMER-14622"/>
<dbReference type="BRENDA" id="2.7.1.36">
    <property type="organism ID" value="3260"/>
</dbReference>
<dbReference type="SABIO-RK" id="Q58487"/>
<dbReference type="UniPathway" id="UPA00057">
    <property type="reaction ID" value="UER00098"/>
</dbReference>
<dbReference type="EvolutionaryTrace" id="Q58487"/>
<dbReference type="Proteomes" id="UP000000805">
    <property type="component" value="Chromosome"/>
</dbReference>
<dbReference type="GO" id="GO:0005829">
    <property type="term" value="C:cytosol"/>
    <property type="evidence" value="ECO:0000318"/>
    <property type="project" value="GO_Central"/>
</dbReference>
<dbReference type="GO" id="GO:0005524">
    <property type="term" value="F:ATP binding"/>
    <property type="evidence" value="ECO:0007669"/>
    <property type="project" value="UniProtKB-UniRule"/>
</dbReference>
<dbReference type="GO" id="GO:0000287">
    <property type="term" value="F:magnesium ion binding"/>
    <property type="evidence" value="ECO:0007669"/>
    <property type="project" value="UniProtKB-UniRule"/>
</dbReference>
<dbReference type="GO" id="GO:0004496">
    <property type="term" value="F:mevalonate kinase activity"/>
    <property type="evidence" value="ECO:0000318"/>
    <property type="project" value="GO_Central"/>
</dbReference>
<dbReference type="GO" id="GO:0019287">
    <property type="term" value="P:isopentenyl diphosphate biosynthetic process, mevalonate pathway"/>
    <property type="evidence" value="ECO:0000318"/>
    <property type="project" value="GO_Central"/>
</dbReference>
<dbReference type="FunFam" id="3.30.230.10:FF:000151">
    <property type="entry name" value="Mevalonate kinase"/>
    <property type="match status" value="1"/>
</dbReference>
<dbReference type="Gene3D" id="3.30.230.10">
    <property type="match status" value="1"/>
</dbReference>
<dbReference type="Gene3D" id="3.30.70.890">
    <property type="entry name" value="GHMP kinase, C-terminal domain"/>
    <property type="match status" value="1"/>
</dbReference>
<dbReference type="HAMAP" id="MF_00217">
    <property type="entry name" value="Mevalonate_kinase"/>
    <property type="match status" value="1"/>
</dbReference>
<dbReference type="InterPro" id="IPR013750">
    <property type="entry name" value="GHMP_kinase_C_dom"/>
</dbReference>
<dbReference type="InterPro" id="IPR036554">
    <property type="entry name" value="GHMP_kinase_C_sf"/>
</dbReference>
<dbReference type="InterPro" id="IPR006204">
    <property type="entry name" value="GHMP_kinase_N_dom"/>
</dbReference>
<dbReference type="InterPro" id="IPR006203">
    <property type="entry name" value="GHMP_knse_ATP-bd_CS"/>
</dbReference>
<dbReference type="InterPro" id="IPR006205">
    <property type="entry name" value="Mev_gal_kin"/>
</dbReference>
<dbReference type="InterPro" id="IPR006206">
    <property type="entry name" value="Mevalonate/galactokinase"/>
</dbReference>
<dbReference type="InterPro" id="IPR022937">
    <property type="entry name" value="Mevalonate_kinase_arc"/>
</dbReference>
<dbReference type="InterPro" id="IPR020568">
    <property type="entry name" value="Ribosomal_Su5_D2-typ_SF"/>
</dbReference>
<dbReference type="InterPro" id="IPR014721">
    <property type="entry name" value="Ribsml_uS5_D2-typ_fold_subgr"/>
</dbReference>
<dbReference type="NCBIfam" id="TIGR00549">
    <property type="entry name" value="mevalon_kin"/>
    <property type="match status" value="1"/>
</dbReference>
<dbReference type="PANTHER" id="PTHR43290">
    <property type="entry name" value="MEVALONATE KINASE"/>
    <property type="match status" value="1"/>
</dbReference>
<dbReference type="PANTHER" id="PTHR43290:SF2">
    <property type="entry name" value="MEVALONATE KINASE"/>
    <property type="match status" value="1"/>
</dbReference>
<dbReference type="Pfam" id="PF08544">
    <property type="entry name" value="GHMP_kinases_C"/>
    <property type="match status" value="1"/>
</dbReference>
<dbReference type="Pfam" id="PF00288">
    <property type="entry name" value="GHMP_kinases_N"/>
    <property type="match status" value="1"/>
</dbReference>
<dbReference type="PIRSF" id="PIRSF000530">
    <property type="entry name" value="Galactokinase"/>
    <property type="match status" value="1"/>
</dbReference>
<dbReference type="PRINTS" id="PR00959">
    <property type="entry name" value="MEVGALKINASE"/>
</dbReference>
<dbReference type="SUPFAM" id="SSF55060">
    <property type="entry name" value="GHMP Kinase, C-terminal domain"/>
    <property type="match status" value="1"/>
</dbReference>
<dbReference type="SUPFAM" id="SSF54211">
    <property type="entry name" value="Ribosomal protein S5 domain 2-like"/>
    <property type="match status" value="1"/>
</dbReference>
<dbReference type="PROSITE" id="PS00627">
    <property type="entry name" value="GHMP_KINASES_ATP"/>
    <property type="match status" value="1"/>
</dbReference>
<sequence length="312" mass="35177">MIIETPSKVILFGEHAVVYGYRAISMAIDLTSTIEIKETQEDEIILNLNDLNKSLGLNLNEIKNINPNNFGDFKYCLCAIKNTLDYLNIEPKTGFKINISSKIPISCGLGSSASITIGTIKAVSGFYNKELKDDEIAKLGYMVEKEIQGKASITDTSTITYKGILEIKNNKFRKIKGEFEEFLKNCKFLIVYAEKRKKKTAELVNEVAKIENKDEIFKEIDKVIDEALKIKNKEDFGKLMTKNHELLKKLNISTPKLDRIVDIGNRFGFGAKLTGAGGGGCVIILVNEEKEKELLKELNKEDVRIFNCRMMN</sequence>
<reference key="1">
    <citation type="journal article" date="1996" name="Science">
        <title>Complete genome sequence of the methanogenic archaeon, Methanococcus jannaschii.</title>
        <authorList>
            <person name="Bult C.J."/>
            <person name="White O."/>
            <person name="Olsen G.J."/>
            <person name="Zhou L."/>
            <person name="Fleischmann R.D."/>
            <person name="Sutton G.G."/>
            <person name="Blake J.A."/>
            <person name="FitzGerald L.M."/>
            <person name="Clayton R.A."/>
            <person name="Gocayne J.D."/>
            <person name="Kerlavage A.R."/>
            <person name="Dougherty B.A."/>
            <person name="Tomb J.-F."/>
            <person name="Adams M.D."/>
            <person name="Reich C.I."/>
            <person name="Overbeek R."/>
            <person name="Kirkness E.F."/>
            <person name="Weinstock K.G."/>
            <person name="Merrick J.M."/>
            <person name="Glodek A."/>
            <person name="Scott J.L."/>
            <person name="Geoghagen N.S.M."/>
            <person name="Weidman J.F."/>
            <person name="Fuhrmann J.L."/>
            <person name="Nguyen D."/>
            <person name="Utterback T.R."/>
            <person name="Kelley J.M."/>
            <person name="Peterson J.D."/>
            <person name="Sadow P.W."/>
            <person name="Hanna M.C."/>
            <person name="Cotton M.D."/>
            <person name="Roberts K.M."/>
            <person name="Hurst M.A."/>
            <person name="Kaine B.P."/>
            <person name="Borodovsky M."/>
            <person name="Klenk H.-P."/>
            <person name="Fraser C.M."/>
            <person name="Smith H.O."/>
            <person name="Woese C.R."/>
            <person name="Venter J.C."/>
        </authorList>
    </citation>
    <scope>NUCLEOTIDE SEQUENCE [LARGE SCALE GENOMIC DNA]</scope>
    <source>
        <strain>ATCC 43067 / DSM 2661 / JAL-1 / JCM 10045 / NBRC 100440</strain>
    </source>
</reference>
<reference key="2">
    <citation type="journal article" date="1999" name="Protein Expr. Purif.">
        <title>Overexpression, purification, and characterization of the thermostable mevalonate kinase from Methanococcus jannaschii.</title>
        <authorList>
            <person name="Huang K.-X."/>
            <person name="Scott A.I."/>
            <person name="Bennett G.N."/>
        </authorList>
    </citation>
    <scope>FUNCTION</scope>
    <scope>CATALYTIC ACTIVITY</scope>
    <scope>COFACTOR</scope>
    <scope>BIOPHYSICOCHEMICAL PROPERTIES</scope>
    <scope>ACTIVITY REGULATION</scope>
    <scope>SUBUNIT</scope>
</reference>
<reference key="3">
    <citation type="journal article" date="2003" name="Protein Expr. Purif.">
        <title>Expression and purification of Arg196 and Lys272 mutants of mevalonate kinase from Methanococcus jannaschii.</title>
        <authorList>
            <person name="Chu X."/>
            <person name="Liu X."/>
            <person name="Yau M."/>
            <person name="Leung Y.C."/>
            <person name="Li D."/>
        </authorList>
    </citation>
    <scope>FUNCTION</scope>
    <scope>CATALYTIC ACTIVITY</scope>
    <scope>KINETIC PARAMETERS</scope>
    <scope>MUTAGENESIS OF ARG-196 AND LYS-272</scope>
</reference>
<reference key="4">
    <citation type="journal article" date="2002" name="J. Biol. Chem.">
        <title>Structure of the Methanococcus jannaschii mevalonate kinase, a member of the GHMP kinase superfamily.</title>
        <authorList>
            <person name="Yang D."/>
            <person name="Shipman L.W."/>
            <person name="Roessner C.A."/>
            <person name="Scott A.I."/>
            <person name="Sacchettini J.C."/>
        </authorList>
    </citation>
    <scope>X-RAY CRYSTALLOGRAPHY (2.40 ANGSTROMS)</scope>
    <scope>ACTIVE SITE</scope>
    <scope>REACTION MECHANISM</scope>
</reference>
<reference key="5">
    <citation type="journal article" date="2005" name="Proteins">
        <title>Structural analysis of a set of proteins resulting from a bacterial genomics project.</title>
        <authorList>
            <person name="Badger J."/>
            <person name="Sauder J.M."/>
            <person name="Adams J.M."/>
            <person name="Antonysamy S."/>
            <person name="Bain K."/>
            <person name="Bergseid M.G."/>
            <person name="Buchanan S.G."/>
            <person name="Buchanan M.D."/>
            <person name="Batiyenko Y."/>
            <person name="Christopher J.A."/>
            <person name="Emtage S."/>
            <person name="Eroshkina A."/>
            <person name="Feil I."/>
            <person name="Furlong E.B."/>
            <person name="Gajiwala K.S."/>
            <person name="Gao X."/>
            <person name="He D."/>
            <person name="Hendle J."/>
            <person name="Huber A."/>
            <person name="Hoda K."/>
            <person name="Kearins P."/>
            <person name="Kissinger C."/>
            <person name="Laubert B."/>
            <person name="Lewis H.A."/>
            <person name="Lin J."/>
            <person name="Loomis K."/>
            <person name="Lorimer D."/>
            <person name="Louie G."/>
            <person name="Maletic M."/>
            <person name="Marsh C.D."/>
            <person name="Miller I."/>
            <person name="Molinari J."/>
            <person name="Muller-Dieckmann H.J."/>
            <person name="Newman J.M."/>
            <person name="Noland B.W."/>
            <person name="Pagarigan B."/>
            <person name="Park F."/>
            <person name="Peat T.S."/>
            <person name="Post K.W."/>
            <person name="Radojicic S."/>
            <person name="Ramos A."/>
            <person name="Romero R."/>
            <person name="Rutter M.E."/>
            <person name="Sanderson W.E."/>
            <person name="Schwinn K.D."/>
            <person name="Tresser J."/>
            <person name="Winhoven J."/>
            <person name="Wright T.A."/>
            <person name="Wu L."/>
            <person name="Xu J."/>
            <person name="Harris T.J.R."/>
        </authorList>
    </citation>
    <scope>X-RAY CRYSTALLOGRAPHY (2.69 ANGSTROMS)</scope>
</reference>
<comment type="function">
    <text evidence="1 2 3">Catalyzes the phosphorylation of (R)-mevalonate (MVA) to (R)-mevalonate 5-phosphate (MVAP). Functions in the mevalonate (MVA) pathway leading to isopentenyl diphosphate (IPP), a key precursor for the biosynthesis of isoprenoid compounds such as archaeal membrane lipids.</text>
</comment>
<comment type="catalytic activity">
    <reaction evidence="1 2 3">
        <text>(R)-mevalonate + ATP = (R)-5-phosphomevalonate + ADP + H(+)</text>
        <dbReference type="Rhea" id="RHEA:17065"/>
        <dbReference type="ChEBI" id="CHEBI:15378"/>
        <dbReference type="ChEBI" id="CHEBI:30616"/>
        <dbReference type="ChEBI" id="CHEBI:36464"/>
        <dbReference type="ChEBI" id="CHEBI:58146"/>
        <dbReference type="ChEBI" id="CHEBI:456216"/>
        <dbReference type="EC" id="2.7.1.36"/>
    </reaction>
</comment>
<comment type="cofactor">
    <cofactor evidence="1 2">
        <name>Mg(2+)</name>
        <dbReference type="ChEBI" id="CHEBI:18420"/>
    </cofactor>
</comment>
<comment type="activity regulation">
    <text evidence="2">Farnesyl- and geranyl-pyrophosphates are competitive inhibitors. Slightly inhibited by high concentration of ATP.</text>
</comment>
<comment type="biophysicochemical properties">
    <kinetics>
        <KM evidence="2 3">68.5 uM for (RS)-mevalonate (at 70 degrees Celsius)</KM>
        <KM evidence="2 3">106 uM for (RS)-mevalonate (at 34 degrees Celsius)</KM>
        <KM evidence="2 3">92 uM for ATP (at 70 degrees Celsius)</KM>
        <KM evidence="2 3">1180 uM for ATP (at 34 degrees Celsius)</KM>
        <Vmax evidence="2 3">387.0 umol/min/mg enzyme (at 70 degrees Celsius)</Vmax>
        <Vmax evidence="2 3">50.3 umol/min/mg enzyme (at 34 degrees Celsius)</Vmax>
    </kinetics>
    <phDependence>
        <text evidence="2">Optimum pH is 8.0-8.5. Exhibits at least 60% of its optimal activity over a rather broad pH range, from 5 to 7.</text>
    </phDependence>
    <temperatureDependence>
        <text evidence="2">Optimum temperature is 70-75 degrees Celsius. Highly thermostable. Retains 100% of its activity after 24 hours of incubation at 70 degrees Celsius. At 90 and 100 degrees Celsius, the enzyme shows a half-life of 15 and 5 minutes, respectively.</text>
    </temperatureDependence>
</comment>
<comment type="pathway">
    <text evidence="1">Isoprenoid biosynthesis; isopentenyl diphosphate biosynthesis via mevalonate pathway; isopentenyl diphosphate from (R)-mevalonate: step 1/3.</text>
</comment>
<comment type="subunit">
    <text evidence="1 2">Homodimer.</text>
</comment>
<comment type="subcellular location">
    <subcellularLocation>
        <location evidence="4">Cytoplasm</location>
    </subcellularLocation>
</comment>
<comment type="similarity">
    <text evidence="1">Belongs to the GHMP kinase family. Mevalonate kinase subfamily.</text>
</comment>
<gene>
    <name evidence="1" type="primary">mvk</name>
    <name type="ordered locus">MJ1087</name>
</gene>
<keyword id="KW-0002">3D-structure</keyword>
<keyword id="KW-0067">ATP-binding</keyword>
<keyword id="KW-0963">Cytoplasm</keyword>
<keyword id="KW-0414">Isoprene biosynthesis</keyword>
<keyword id="KW-0418">Kinase</keyword>
<keyword id="KW-0444">Lipid biosynthesis</keyword>
<keyword id="KW-0443">Lipid metabolism</keyword>
<keyword id="KW-0460">Magnesium</keyword>
<keyword id="KW-0547">Nucleotide-binding</keyword>
<keyword id="KW-1185">Reference proteome</keyword>
<keyword id="KW-0808">Transferase</keyword>
<proteinExistence type="evidence at protein level"/>
<name>MVK_METJA</name>
<evidence type="ECO:0000255" key="1">
    <source>
        <dbReference type="HAMAP-Rule" id="MF_00217"/>
    </source>
</evidence>
<evidence type="ECO:0000269" key="2">
    <source>
    </source>
</evidence>
<evidence type="ECO:0000269" key="3">
    <source>
    </source>
</evidence>
<evidence type="ECO:0000305" key="4"/>
<evidence type="ECO:0000305" key="5">
    <source>
    </source>
</evidence>
<evidence type="ECO:0007829" key="6">
    <source>
        <dbReference type="PDB" id="1KKH"/>
    </source>
</evidence>
<accession>Q58487</accession>
<protein>
    <recommendedName>
        <fullName evidence="1">Mevalonate kinase</fullName>
        <shortName evidence="1">MK</shortName>
        <shortName evidence="1">MVK</shortName>
        <ecNumber evidence="1">2.7.1.36</ecNumber>
    </recommendedName>
</protein>
<feature type="chain" id="PRO_0000156665" description="Mevalonate kinase">
    <location>
        <begin position="1"/>
        <end position="312"/>
    </location>
</feature>
<feature type="active site" description="Proton acceptor" evidence="5">
    <location>
        <position position="155"/>
    </location>
</feature>
<feature type="binding site" evidence="1">
    <location>
        <begin position="104"/>
        <end position="114"/>
    </location>
    <ligand>
        <name>ATP</name>
        <dbReference type="ChEBI" id="CHEBI:30616"/>
    </ligand>
</feature>
<feature type="mutagenesis site" description="13.5-fold decrease in affinity for mevalonate, whereas only little effect on affinity for ATP and on reaction rate." evidence="3">
    <original>R</original>
    <variation>K</variation>
    <location>
        <position position="196"/>
    </location>
</feature>
<feature type="mutagenesis site" description="1900-fold decrease in catalytic efficiency." evidence="3">
    <original>R</original>
    <variation>Q</variation>
    <location>
        <position position="196"/>
    </location>
</feature>
<feature type="mutagenesis site" description="63-fold decrease in catalytic efficiency." evidence="3">
    <original>R</original>
    <variation>V</variation>
    <location>
        <position position="196"/>
    </location>
</feature>
<feature type="mutagenesis site" description="13- to 26-fold decrease in catalytic efficiency. Still thermostable." evidence="3">
    <original>K</original>
    <variation>R</variation>
    <variation>A</variation>
    <location>
        <position position="272"/>
    </location>
</feature>
<feature type="strand" evidence="6">
    <location>
        <begin position="1"/>
        <end position="12"/>
    </location>
</feature>
<feature type="helix" evidence="6">
    <location>
        <begin position="16"/>
        <end position="19"/>
    </location>
</feature>
<feature type="strand" evidence="6">
    <location>
        <begin position="23"/>
        <end position="38"/>
    </location>
</feature>
<feature type="strand" evidence="6">
    <location>
        <begin position="41"/>
        <end position="48"/>
    </location>
</feature>
<feature type="turn" evidence="6">
    <location>
        <begin position="49"/>
        <end position="51"/>
    </location>
</feature>
<feature type="strand" evidence="6">
    <location>
        <begin position="54"/>
        <end position="58"/>
    </location>
</feature>
<feature type="turn" evidence="6">
    <location>
        <begin position="59"/>
        <end position="61"/>
    </location>
</feature>
<feature type="helix" evidence="6">
    <location>
        <begin position="62"/>
        <end position="64"/>
    </location>
</feature>
<feature type="helix" evidence="6">
    <location>
        <begin position="67"/>
        <end position="69"/>
    </location>
</feature>
<feature type="helix" evidence="6">
    <location>
        <begin position="71"/>
        <end position="73"/>
    </location>
</feature>
<feature type="helix" evidence="6">
    <location>
        <begin position="74"/>
        <end position="86"/>
    </location>
</feature>
<feature type="strand" evidence="6">
    <location>
        <begin position="95"/>
        <end position="101"/>
    </location>
</feature>
<feature type="strand" evidence="6">
    <location>
        <begin position="105"/>
        <end position="109"/>
    </location>
</feature>
<feature type="helix" evidence="6">
    <location>
        <begin position="111"/>
        <end position="125"/>
    </location>
</feature>
<feature type="turn" evidence="6">
    <location>
        <begin position="126"/>
        <end position="128"/>
    </location>
</feature>
<feature type="helix" evidence="6">
    <location>
        <begin position="133"/>
        <end position="147"/>
    </location>
</feature>
<feature type="strand" evidence="6">
    <location>
        <begin position="148"/>
        <end position="150"/>
    </location>
</feature>
<feature type="helix" evidence="6">
    <location>
        <begin position="154"/>
        <end position="161"/>
    </location>
</feature>
<feature type="strand" evidence="6">
    <location>
        <begin position="163"/>
        <end position="170"/>
    </location>
</feature>
<feature type="strand" evidence="6">
    <location>
        <begin position="172"/>
        <end position="175"/>
    </location>
</feature>
<feature type="helix" evidence="6">
    <location>
        <begin position="177"/>
        <end position="184"/>
    </location>
</feature>
<feature type="strand" evidence="6">
    <location>
        <begin position="188"/>
        <end position="194"/>
    </location>
</feature>
<feature type="helix" evidence="6">
    <location>
        <begin position="200"/>
        <end position="208"/>
    </location>
</feature>
<feature type="helix" evidence="6">
    <location>
        <begin position="213"/>
        <end position="229"/>
    </location>
</feature>
<feature type="helix" evidence="6">
    <location>
        <begin position="233"/>
        <end position="248"/>
    </location>
</feature>
<feature type="turn" evidence="6">
    <location>
        <begin position="249"/>
        <end position="251"/>
    </location>
</feature>
<feature type="helix" evidence="6">
    <location>
        <begin position="255"/>
        <end position="267"/>
    </location>
</feature>
<feature type="strand" evidence="6">
    <location>
        <begin position="268"/>
        <end position="273"/>
    </location>
</feature>
<feature type="strand" evidence="6">
    <location>
        <begin position="275"/>
        <end position="285"/>
    </location>
</feature>
<feature type="helix" evidence="6">
    <location>
        <begin position="288"/>
        <end position="290"/>
    </location>
</feature>
<feature type="helix" evidence="6">
    <location>
        <begin position="291"/>
        <end position="299"/>
    </location>
</feature>
<feature type="strand" evidence="6">
    <location>
        <begin position="304"/>
        <end position="308"/>
    </location>
</feature>
<organism>
    <name type="scientific">Methanocaldococcus jannaschii (strain ATCC 43067 / DSM 2661 / JAL-1 / JCM 10045 / NBRC 100440)</name>
    <name type="common">Methanococcus jannaschii</name>
    <dbReference type="NCBI Taxonomy" id="243232"/>
    <lineage>
        <taxon>Archaea</taxon>
        <taxon>Methanobacteriati</taxon>
        <taxon>Methanobacteriota</taxon>
        <taxon>Methanomada group</taxon>
        <taxon>Methanococci</taxon>
        <taxon>Methanococcales</taxon>
        <taxon>Methanocaldococcaceae</taxon>
        <taxon>Methanocaldococcus</taxon>
    </lineage>
</organism>